<sequence length="68" mass="7707">MNTDQQKVSEIFQSSKEKLQGDAKVVSDAFKKMASQDKDGKTTDADESEKHNYQEQYNKLKGAGHKKE</sequence>
<gene>
    <name type="primary">PAI3</name>
    <name type="ordered locus">YMR174C</name>
    <name type="ORF">YM8010.04C</name>
</gene>
<organism>
    <name type="scientific">Saccharomyces cerevisiae (strain ATCC 204508 / S288c)</name>
    <name type="common">Baker's yeast</name>
    <dbReference type="NCBI Taxonomy" id="559292"/>
    <lineage>
        <taxon>Eukaryota</taxon>
        <taxon>Fungi</taxon>
        <taxon>Dikarya</taxon>
        <taxon>Ascomycota</taxon>
        <taxon>Saccharomycotina</taxon>
        <taxon>Saccharomycetes</taxon>
        <taxon>Saccharomycetales</taxon>
        <taxon>Saccharomycetaceae</taxon>
        <taxon>Saccharomyces</taxon>
    </lineage>
</organism>
<evidence type="ECO:0000256" key="1">
    <source>
        <dbReference type="SAM" id="MobiDB-lite"/>
    </source>
</evidence>
<evidence type="ECO:0000269" key="2">
    <source ref="1"/>
</evidence>
<evidence type="ECO:0000305" key="3"/>
<evidence type="ECO:0007829" key="4">
    <source>
        <dbReference type="PDB" id="1DPJ"/>
    </source>
</evidence>
<protein>
    <recommendedName>
        <fullName>Protease A inhibitor 3</fullName>
    </recommendedName>
    <alternativeName>
        <fullName>Proteinase inhibitor I(A)3</fullName>
    </alternativeName>
    <alternativeName>
        <fullName>Proteinase yscA-inhibitor</fullName>
    </alternativeName>
    <alternativeName>
        <fullName>Saccharopepsin inhibitor</fullName>
    </alternativeName>
</protein>
<reference key="1">
    <citation type="journal article" date="1980" name="Carlsberg Res. Commun.">
        <title>The amino acid sequence of proteinase A inhibitor 3 from baker's yeast.</title>
        <authorList>
            <person name="Biedermann K."/>
            <person name="Montali U."/>
            <person name="Martin B."/>
            <person name="Svendsen I."/>
            <person name="Ottesen M."/>
        </authorList>
    </citation>
    <scope>PROTEIN SEQUENCE</scope>
    <scope>ACETYLATION AT MET-1</scope>
</reference>
<reference key="2">
    <citation type="journal article" date="1991" name="FEBS Lett.">
        <title>The proteinase yscA-inhibitor, IA3, gene. Studies of cytoplasmic proteinase inhibitor deficiency on yeast physiology.</title>
        <authorList>
            <person name="Schu P."/>
            <person name="Wolf D.H."/>
        </authorList>
    </citation>
    <scope>NUCLEOTIDE SEQUENCE [GENOMIC DNA]</scope>
    <source>
        <strain>ATCC 204508 / S288c</strain>
    </source>
</reference>
<reference key="3">
    <citation type="journal article" date="1997" name="Nature">
        <title>The nucleotide sequence of Saccharomyces cerevisiae chromosome XIII.</title>
        <authorList>
            <person name="Bowman S."/>
            <person name="Churcher C.M."/>
            <person name="Badcock K."/>
            <person name="Brown D."/>
            <person name="Chillingworth T."/>
            <person name="Connor R."/>
            <person name="Dedman K."/>
            <person name="Devlin K."/>
            <person name="Gentles S."/>
            <person name="Hamlin N."/>
            <person name="Hunt S."/>
            <person name="Jagels K."/>
            <person name="Lye G."/>
            <person name="Moule S."/>
            <person name="Odell C."/>
            <person name="Pearson D."/>
            <person name="Rajandream M.A."/>
            <person name="Rice P."/>
            <person name="Skelton J."/>
            <person name="Walsh S.V."/>
            <person name="Whitehead S."/>
            <person name="Barrell B.G."/>
        </authorList>
    </citation>
    <scope>NUCLEOTIDE SEQUENCE [LARGE SCALE GENOMIC DNA]</scope>
    <source>
        <strain>ATCC 204508 / S288c</strain>
    </source>
</reference>
<reference key="4">
    <citation type="journal article" date="2014" name="G3 (Bethesda)">
        <title>The reference genome sequence of Saccharomyces cerevisiae: Then and now.</title>
        <authorList>
            <person name="Engel S.R."/>
            <person name="Dietrich F.S."/>
            <person name="Fisk D.G."/>
            <person name="Binkley G."/>
            <person name="Balakrishnan R."/>
            <person name="Costanzo M.C."/>
            <person name="Dwight S.S."/>
            <person name="Hitz B.C."/>
            <person name="Karra K."/>
            <person name="Nash R.S."/>
            <person name="Weng S."/>
            <person name="Wong E.D."/>
            <person name="Lloyd P."/>
            <person name="Skrzypek M.S."/>
            <person name="Miyasato S.R."/>
            <person name="Simison M."/>
            <person name="Cherry J.M."/>
        </authorList>
    </citation>
    <scope>GENOME REANNOTATION</scope>
    <source>
        <strain>ATCC 204508 / S288c</strain>
    </source>
</reference>
<reference key="5">
    <citation type="journal article" date="2007" name="Genome Res.">
        <title>Approaching a complete repository of sequence-verified protein-encoding clones for Saccharomyces cerevisiae.</title>
        <authorList>
            <person name="Hu Y."/>
            <person name="Rolfs A."/>
            <person name="Bhullar B."/>
            <person name="Murthy T.V.S."/>
            <person name="Zhu C."/>
            <person name="Berger M.F."/>
            <person name="Camargo A.A."/>
            <person name="Kelley F."/>
            <person name="McCarron S."/>
            <person name="Jepson D."/>
            <person name="Richardson A."/>
            <person name="Raphael J."/>
            <person name="Moreira D."/>
            <person name="Taycher E."/>
            <person name="Zuo D."/>
            <person name="Mohr S."/>
            <person name="Kane M.F."/>
            <person name="Williamson J."/>
            <person name="Simpson A.J.G."/>
            <person name="Bulyk M.L."/>
            <person name="Harlow E."/>
            <person name="Marsischky G."/>
            <person name="Kolodner R.D."/>
            <person name="LaBaer J."/>
        </authorList>
    </citation>
    <scope>NUCLEOTIDE SEQUENCE [GENOMIC DNA]</scope>
    <source>
        <strain>ATCC 204508 / S288c</strain>
    </source>
</reference>
<reference key="6">
    <citation type="journal article" date="2008" name="Mol. Cell. Proteomics">
        <title>A multidimensional chromatography technology for in-depth phosphoproteome analysis.</title>
        <authorList>
            <person name="Albuquerque C.P."/>
            <person name="Smolka M.B."/>
            <person name="Payne S.H."/>
            <person name="Bafna V."/>
            <person name="Eng J."/>
            <person name="Zhou H."/>
        </authorList>
    </citation>
    <scope>IDENTIFICATION BY MASS SPECTROMETRY [LARGE SCALE ANALYSIS]</scope>
</reference>
<reference key="7">
    <citation type="journal article" date="2000" name="Nat. Struct. Biol.">
        <title>The aspartic proteinase from Saccharomyces cerevisiae folds its own inhibitor into a helix.</title>
        <authorList>
            <person name="Li M."/>
            <person name="Phylip L.H."/>
            <person name="Lees W.E."/>
            <person name="Winther J.R."/>
            <person name="Dunn B.M."/>
            <person name="Wlodawer A."/>
            <person name="Kay J."/>
            <person name="Gustchina A."/>
        </authorList>
    </citation>
    <scope>X-RAY CRYSTALLOGRAPHY (1.8 ANGSTROMS) OF 2-32</scope>
</reference>
<name>IPA3_YEAST</name>
<comment type="function">
    <text>Specific and potent inhibitor for yeast aspartic protease A (yscA). The proteinase acts as a folding template stabilizing the helical conformation in the inhibitor, which results in the potent and specific blockage of the proteolytic activity.</text>
</comment>
<comment type="similarity">
    <text evidence="3">Belongs to the protease inhibitor I34 family.</text>
</comment>
<keyword id="KW-0002">3D-structure</keyword>
<keyword id="KW-0007">Acetylation</keyword>
<keyword id="KW-0062">Aspartic protease inhibitor</keyword>
<keyword id="KW-0903">Direct protein sequencing</keyword>
<keyword id="KW-0646">Protease inhibitor</keyword>
<keyword id="KW-1185">Reference proteome</keyword>
<proteinExistence type="evidence at protein level"/>
<feature type="chain" id="PRO_0000195901" description="Protease A inhibitor 3">
    <location>
        <begin position="1"/>
        <end position="68"/>
    </location>
</feature>
<feature type="region of interest" description="Inhibitory domain">
    <location>
        <begin position="1"/>
        <end position="32"/>
    </location>
</feature>
<feature type="region of interest" description="Disordered" evidence="1">
    <location>
        <begin position="1"/>
        <end position="21"/>
    </location>
</feature>
<feature type="region of interest" description="Disordered" evidence="1">
    <location>
        <begin position="33"/>
        <end position="68"/>
    </location>
</feature>
<feature type="compositionally biased region" description="Polar residues" evidence="1">
    <location>
        <begin position="1"/>
        <end position="14"/>
    </location>
</feature>
<feature type="compositionally biased region" description="Basic and acidic residues" evidence="1">
    <location>
        <begin position="33"/>
        <end position="53"/>
    </location>
</feature>
<feature type="modified residue" description="N-acetylmethionine" evidence="2">
    <location>
        <position position="1"/>
    </location>
</feature>
<feature type="helix" evidence="4">
    <location>
        <begin position="4"/>
        <end position="30"/>
    </location>
</feature>
<accession>P01094</accession>
<accession>D6VZZ6</accession>
<dbReference type="EMBL" id="X60050">
    <property type="protein sequence ID" value="CAA42650.1"/>
    <property type="molecule type" value="Genomic_DNA"/>
</dbReference>
<dbReference type="EMBL" id="Z49808">
    <property type="protein sequence ID" value="CAA89907.1"/>
    <property type="molecule type" value="Genomic_DNA"/>
</dbReference>
<dbReference type="EMBL" id="AY558120">
    <property type="protein sequence ID" value="AAS56446.1"/>
    <property type="molecule type" value="Genomic_DNA"/>
</dbReference>
<dbReference type="EMBL" id="BK006946">
    <property type="protein sequence ID" value="DAA10070.1"/>
    <property type="molecule type" value="Genomic_DNA"/>
</dbReference>
<dbReference type="PIR" id="A01334">
    <property type="entry name" value="IABY3"/>
</dbReference>
<dbReference type="RefSeq" id="NP_013899.1">
    <property type="nucleotide sequence ID" value="NM_001182680.1"/>
</dbReference>
<dbReference type="PDB" id="1DP5">
    <property type="method" value="X-ray"/>
    <property type="resolution" value="2.20 A"/>
    <property type="chains" value="B=1-68"/>
</dbReference>
<dbReference type="PDB" id="1DPJ">
    <property type="method" value="X-ray"/>
    <property type="resolution" value="1.80 A"/>
    <property type="chains" value="B=2-34"/>
</dbReference>
<dbReference type="PDB" id="1G0V">
    <property type="method" value="X-ray"/>
    <property type="resolution" value="2.00 A"/>
    <property type="chains" value="B=1-31"/>
</dbReference>
<dbReference type="PDBsum" id="1DP5"/>
<dbReference type="PDBsum" id="1DPJ"/>
<dbReference type="PDBsum" id="1G0V"/>
<dbReference type="BMRB" id="P01094"/>
<dbReference type="SMR" id="P01094"/>
<dbReference type="BioGRID" id="35352">
    <property type="interactions" value="100"/>
</dbReference>
<dbReference type="FunCoup" id="P01094">
    <property type="interactions" value="63"/>
</dbReference>
<dbReference type="IntAct" id="P01094">
    <property type="interactions" value="5"/>
</dbReference>
<dbReference type="MINT" id="P01094"/>
<dbReference type="STRING" id="4932.YMR174C"/>
<dbReference type="MEROPS" id="I34.001"/>
<dbReference type="iPTMnet" id="P01094"/>
<dbReference type="PaxDb" id="4932-YMR174C"/>
<dbReference type="PeptideAtlas" id="P01094"/>
<dbReference type="EnsemblFungi" id="YMR174C_mRNA">
    <property type="protein sequence ID" value="YMR174C"/>
    <property type="gene ID" value="YMR174C"/>
</dbReference>
<dbReference type="GeneID" id="855212"/>
<dbReference type="KEGG" id="sce:YMR174C"/>
<dbReference type="AGR" id="SGD:S000004786"/>
<dbReference type="SGD" id="S000004786">
    <property type="gene designation" value="PAI3"/>
</dbReference>
<dbReference type="VEuPathDB" id="FungiDB:YMR174C"/>
<dbReference type="HOGENOM" id="CLU_2795383_0_0_1"/>
<dbReference type="InParanoid" id="P01094"/>
<dbReference type="OMA" id="EMFQQAK"/>
<dbReference type="OrthoDB" id="4048329at2759"/>
<dbReference type="BioCyc" id="YEAST:G3O-32862-MONOMER"/>
<dbReference type="BioGRID-ORCS" id="855212">
    <property type="hits" value="0 hits in 10 CRISPR screens"/>
</dbReference>
<dbReference type="EvolutionaryTrace" id="P01094"/>
<dbReference type="PRO" id="PR:P01094"/>
<dbReference type="Proteomes" id="UP000002311">
    <property type="component" value="Chromosome XIII"/>
</dbReference>
<dbReference type="RNAct" id="P01094">
    <property type="molecule type" value="protein"/>
</dbReference>
<dbReference type="GO" id="GO:0005737">
    <property type="term" value="C:cytoplasm"/>
    <property type="evidence" value="ECO:0007005"/>
    <property type="project" value="SGD"/>
</dbReference>
<dbReference type="GO" id="GO:0005634">
    <property type="term" value="C:nucleus"/>
    <property type="evidence" value="ECO:0007005"/>
    <property type="project" value="SGD"/>
</dbReference>
<dbReference type="GO" id="GO:0032991">
    <property type="term" value="C:protein-containing complex"/>
    <property type="evidence" value="ECO:0000314"/>
    <property type="project" value="CAFA"/>
</dbReference>
<dbReference type="GO" id="GO:0005773">
    <property type="term" value="C:vacuole"/>
    <property type="evidence" value="ECO:0007669"/>
    <property type="project" value="GOC"/>
</dbReference>
<dbReference type="GO" id="GO:0019828">
    <property type="term" value="F:aspartic-type endopeptidase inhibitor activity"/>
    <property type="evidence" value="ECO:0000315"/>
    <property type="project" value="CAFA"/>
</dbReference>
<dbReference type="GO" id="GO:0004866">
    <property type="term" value="F:endopeptidase inhibitor activity"/>
    <property type="evidence" value="ECO:0000314"/>
    <property type="project" value="CAFA"/>
</dbReference>
<dbReference type="GO" id="GO:0002020">
    <property type="term" value="F:protease binding"/>
    <property type="evidence" value="ECO:0000353"/>
    <property type="project" value="CAFA"/>
</dbReference>
<dbReference type="GO" id="GO:0010951">
    <property type="term" value="P:negative regulation of endopeptidase activity"/>
    <property type="evidence" value="ECO:0000314"/>
    <property type="project" value="CAFA"/>
</dbReference>
<dbReference type="GO" id="GO:0007039">
    <property type="term" value="P:protein catabolic process in the vacuole"/>
    <property type="evidence" value="ECO:0000315"/>
    <property type="project" value="SGD"/>
</dbReference>
<dbReference type="DisProt" id="DP00179"/>
<dbReference type="InterPro" id="IPR008956">
    <property type="entry name" value="IA3_dom_sf"/>
</dbReference>
<dbReference type="InterPro" id="IPR019507">
    <property type="entry name" value="Pai3"/>
</dbReference>
<dbReference type="Pfam" id="PF10466">
    <property type="entry name" value="Inhibitor_I34"/>
    <property type="match status" value="1"/>
</dbReference>
<dbReference type="SUPFAM" id="SSF48686">
    <property type="entry name" value="Proteinase A inhibitor IA3"/>
    <property type="match status" value="1"/>
</dbReference>